<dbReference type="EC" id="6.2.1.5" evidence="1"/>
<dbReference type="EMBL" id="CP000458">
    <property type="protein sequence ID" value="ABK09399.1"/>
    <property type="molecule type" value="Genomic_DNA"/>
</dbReference>
<dbReference type="RefSeq" id="WP_006477915.1">
    <property type="nucleotide sequence ID" value="NC_008542.1"/>
</dbReference>
<dbReference type="SMR" id="A0KA72"/>
<dbReference type="GeneID" id="83049462"/>
<dbReference type="KEGG" id="bch:Bcen2424_2649"/>
<dbReference type="HOGENOM" id="CLU_037430_0_2_4"/>
<dbReference type="UniPathway" id="UPA00223">
    <property type="reaction ID" value="UER00999"/>
</dbReference>
<dbReference type="GO" id="GO:0005829">
    <property type="term" value="C:cytosol"/>
    <property type="evidence" value="ECO:0007669"/>
    <property type="project" value="TreeGrafter"/>
</dbReference>
<dbReference type="GO" id="GO:0042709">
    <property type="term" value="C:succinate-CoA ligase complex"/>
    <property type="evidence" value="ECO:0007669"/>
    <property type="project" value="TreeGrafter"/>
</dbReference>
<dbReference type="GO" id="GO:0005524">
    <property type="term" value="F:ATP binding"/>
    <property type="evidence" value="ECO:0007669"/>
    <property type="project" value="UniProtKB-UniRule"/>
</dbReference>
<dbReference type="GO" id="GO:0000287">
    <property type="term" value="F:magnesium ion binding"/>
    <property type="evidence" value="ECO:0007669"/>
    <property type="project" value="UniProtKB-UniRule"/>
</dbReference>
<dbReference type="GO" id="GO:0004775">
    <property type="term" value="F:succinate-CoA ligase (ADP-forming) activity"/>
    <property type="evidence" value="ECO:0007669"/>
    <property type="project" value="UniProtKB-UniRule"/>
</dbReference>
<dbReference type="GO" id="GO:0004776">
    <property type="term" value="F:succinate-CoA ligase (GDP-forming) activity"/>
    <property type="evidence" value="ECO:0007669"/>
    <property type="project" value="RHEA"/>
</dbReference>
<dbReference type="GO" id="GO:0006104">
    <property type="term" value="P:succinyl-CoA metabolic process"/>
    <property type="evidence" value="ECO:0007669"/>
    <property type="project" value="TreeGrafter"/>
</dbReference>
<dbReference type="GO" id="GO:0006099">
    <property type="term" value="P:tricarboxylic acid cycle"/>
    <property type="evidence" value="ECO:0007669"/>
    <property type="project" value="UniProtKB-UniRule"/>
</dbReference>
<dbReference type="FunFam" id="3.30.1490.20:FF:000002">
    <property type="entry name" value="Succinate--CoA ligase [ADP-forming] subunit beta"/>
    <property type="match status" value="1"/>
</dbReference>
<dbReference type="FunFam" id="3.30.470.20:FF:000002">
    <property type="entry name" value="Succinate--CoA ligase [ADP-forming] subunit beta"/>
    <property type="match status" value="1"/>
</dbReference>
<dbReference type="FunFam" id="3.40.50.261:FF:000001">
    <property type="entry name" value="Succinate--CoA ligase [ADP-forming] subunit beta"/>
    <property type="match status" value="1"/>
</dbReference>
<dbReference type="Gene3D" id="3.30.1490.20">
    <property type="entry name" value="ATP-grasp fold, A domain"/>
    <property type="match status" value="1"/>
</dbReference>
<dbReference type="Gene3D" id="3.30.470.20">
    <property type="entry name" value="ATP-grasp fold, B domain"/>
    <property type="match status" value="1"/>
</dbReference>
<dbReference type="Gene3D" id="3.40.50.261">
    <property type="entry name" value="Succinyl-CoA synthetase domains"/>
    <property type="match status" value="1"/>
</dbReference>
<dbReference type="HAMAP" id="MF_00558">
    <property type="entry name" value="Succ_CoA_beta"/>
    <property type="match status" value="1"/>
</dbReference>
<dbReference type="InterPro" id="IPR011761">
    <property type="entry name" value="ATP-grasp"/>
</dbReference>
<dbReference type="InterPro" id="IPR013650">
    <property type="entry name" value="ATP-grasp_succ-CoA_synth-type"/>
</dbReference>
<dbReference type="InterPro" id="IPR013815">
    <property type="entry name" value="ATP_grasp_subdomain_1"/>
</dbReference>
<dbReference type="InterPro" id="IPR017866">
    <property type="entry name" value="Succ-CoA_synthase_bsu_CS"/>
</dbReference>
<dbReference type="InterPro" id="IPR005811">
    <property type="entry name" value="SUCC_ACL_C"/>
</dbReference>
<dbReference type="InterPro" id="IPR005809">
    <property type="entry name" value="Succ_CoA_ligase-like_bsu"/>
</dbReference>
<dbReference type="InterPro" id="IPR016102">
    <property type="entry name" value="Succinyl-CoA_synth-like"/>
</dbReference>
<dbReference type="NCBIfam" id="NF001913">
    <property type="entry name" value="PRK00696.1"/>
    <property type="match status" value="1"/>
</dbReference>
<dbReference type="NCBIfam" id="TIGR01016">
    <property type="entry name" value="sucCoAbeta"/>
    <property type="match status" value="1"/>
</dbReference>
<dbReference type="PANTHER" id="PTHR11815:SF10">
    <property type="entry name" value="SUCCINATE--COA LIGASE [GDP-FORMING] SUBUNIT BETA, MITOCHONDRIAL"/>
    <property type="match status" value="1"/>
</dbReference>
<dbReference type="PANTHER" id="PTHR11815">
    <property type="entry name" value="SUCCINYL-COA SYNTHETASE BETA CHAIN"/>
    <property type="match status" value="1"/>
</dbReference>
<dbReference type="Pfam" id="PF08442">
    <property type="entry name" value="ATP-grasp_2"/>
    <property type="match status" value="1"/>
</dbReference>
<dbReference type="Pfam" id="PF00549">
    <property type="entry name" value="Ligase_CoA"/>
    <property type="match status" value="1"/>
</dbReference>
<dbReference type="PIRSF" id="PIRSF001554">
    <property type="entry name" value="SucCS_beta"/>
    <property type="match status" value="1"/>
</dbReference>
<dbReference type="SUPFAM" id="SSF56059">
    <property type="entry name" value="Glutathione synthetase ATP-binding domain-like"/>
    <property type="match status" value="1"/>
</dbReference>
<dbReference type="SUPFAM" id="SSF52210">
    <property type="entry name" value="Succinyl-CoA synthetase domains"/>
    <property type="match status" value="1"/>
</dbReference>
<dbReference type="PROSITE" id="PS50975">
    <property type="entry name" value="ATP_GRASP"/>
    <property type="match status" value="1"/>
</dbReference>
<dbReference type="PROSITE" id="PS01217">
    <property type="entry name" value="SUCCINYL_COA_LIG_3"/>
    <property type="match status" value="1"/>
</dbReference>
<keyword id="KW-0067">ATP-binding</keyword>
<keyword id="KW-0436">Ligase</keyword>
<keyword id="KW-0460">Magnesium</keyword>
<keyword id="KW-0479">Metal-binding</keyword>
<keyword id="KW-0547">Nucleotide-binding</keyword>
<keyword id="KW-0816">Tricarboxylic acid cycle</keyword>
<proteinExistence type="inferred from homology"/>
<evidence type="ECO:0000255" key="1">
    <source>
        <dbReference type="HAMAP-Rule" id="MF_00558"/>
    </source>
</evidence>
<feature type="chain" id="PRO_1000082036" description="Succinate--CoA ligase [ADP-forming] subunit beta">
    <location>
        <begin position="1"/>
        <end position="388"/>
    </location>
</feature>
<feature type="domain" description="ATP-grasp" evidence="1">
    <location>
        <begin position="9"/>
        <end position="244"/>
    </location>
</feature>
<feature type="binding site" evidence="1">
    <location>
        <position position="46"/>
    </location>
    <ligand>
        <name>ATP</name>
        <dbReference type="ChEBI" id="CHEBI:30616"/>
    </ligand>
</feature>
<feature type="binding site" evidence="1">
    <location>
        <begin position="53"/>
        <end position="55"/>
    </location>
    <ligand>
        <name>ATP</name>
        <dbReference type="ChEBI" id="CHEBI:30616"/>
    </ligand>
</feature>
<feature type="binding site" evidence="1">
    <location>
        <position position="99"/>
    </location>
    <ligand>
        <name>ATP</name>
        <dbReference type="ChEBI" id="CHEBI:30616"/>
    </ligand>
</feature>
<feature type="binding site" evidence="1">
    <location>
        <position position="102"/>
    </location>
    <ligand>
        <name>ATP</name>
        <dbReference type="ChEBI" id="CHEBI:30616"/>
    </ligand>
</feature>
<feature type="binding site" evidence="1">
    <location>
        <position position="107"/>
    </location>
    <ligand>
        <name>ATP</name>
        <dbReference type="ChEBI" id="CHEBI:30616"/>
    </ligand>
</feature>
<feature type="binding site" evidence="1">
    <location>
        <position position="199"/>
    </location>
    <ligand>
        <name>Mg(2+)</name>
        <dbReference type="ChEBI" id="CHEBI:18420"/>
    </ligand>
</feature>
<feature type="binding site" evidence="1">
    <location>
        <position position="213"/>
    </location>
    <ligand>
        <name>Mg(2+)</name>
        <dbReference type="ChEBI" id="CHEBI:18420"/>
    </ligand>
</feature>
<feature type="binding site" evidence="1">
    <location>
        <position position="264"/>
    </location>
    <ligand>
        <name>substrate</name>
        <note>ligand shared with subunit alpha</note>
    </ligand>
</feature>
<feature type="binding site" evidence="1">
    <location>
        <begin position="321"/>
        <end position="323"/>
    </location>
    <ligand>
        <name>substrate</name>
        <note>ligand shared with subunit alpha</note>
    </ligand>
</feature>
<protein>
    <recommendedName>
        <fullName evidence="1">Succinate--CoA ligase [ADP-forming] subunit beta</fullName>
        <ecNumber evidence="1">6.2.1.5</ecNumber>
    </recommendedName>
    <alternativeName>
        <fullName evidence="1">Succinyl-CoA synthetase subunit beta</fullName>
        <shortName evidence="1">SCS-beta</shortName>
    </alternativeName>
</protein>
<comment type="function">
    <text evidence="1">Succinyl-CoA synthetase functions in the citric acid cycle (TCA), coupling the hydrolysis of succinyl-CoA to the synthesis of either ATP or GTP and thus represents the only step of substrate-level phosphorylation in the TCA. The beta subunit provides nucleotide specificity of the enzyme and binds the substrate succinate, while the binding sites for coenzyme A and phosphate are found in the alpha subunit.</text>
</comment>
<comment type="catalytic activity">
    <reaction evidence="1">
        <text>succinate + ATP + CoA = succinyl-CoA + ADP + phosphate</text>
        <dbReference type="Rhea" id="RHEA:17661"/>
        <dbReference type="ChEBI" id="CHEBI:30031"/>
        <dbReference type="ChEBI" id="CHEBI:30616"/>
        <dbReference type="ChEBI" id="CHEBI:43474"/>
        <dbReference type="ChEBI" id="CHEBI:57287"/>
        <dbReference type="ChEBI" id="CHEBI:57292"/>
        <dbReference type="ChEBI" id="CHEBI:456216"/>
        <dbReference type="EC" id="6.2.1.5"/>
    </reaction>
    <physiologicalReaction direction="right-to-left" evidence="1">
        <dbReference type="Rhea" id="RHEA:17663"/>
    </physiologicalReaction>
</comment>
<comment type="catalytic activity">
    <reaction evidence="1">
        <text>GTP + succinate + CoA = succinyl-CoA + GDP + phosphate</text>
        <dbReference type="Rhea" id="RHEA:22120"/>
        <dbReference type="ChEBI" id="CHEBI:30031"/>
        <dbReference type="ChEBI" id="CHEBI:37565"/>
        <dbReference type="ChEBI" id="CHEBI:43474"/>
        <dbReference type="ChEBI" id="CHEBI:57287"/>
        <dbReference type="ChEBI" id="CHEBI:57292"/>
        <dbReference type="ChEBI" id="CHEBI:58189"/>
    </reaction>
    <physiologicalReaction direction="right-to-left" evidence="1">
        <dbReference type="Rhea" id="RHEA:22122"/>
    </physiologicalReaction>
</comment>
<comment type="cofactor">
    <cofactor evidence="1">
        <name>Mg(2+)</name>
        <dbReference type="ChEBI" id="CHEBI:18420"/>
    </cofactor>
    <text evidence="1">Binds 1 Mg(2+) ion per subunit.</text>
</comment>
<comment type="pathway">
    <text evidence="1">Carbohydrate metabolism; tricarboxylic acid cycle; succinate from succinyl-CoA (ligase route): step 1/1.</text>
</comment>
<comment type="subunit">
    <text evidence="1">Heterotetramer of two alpha and two beta subunits.</text>
</comment>
<comment type="similarity">
    <text evidence="1">Belongs to the succinate/malate CoA ligase beta subunit family.</text>
</comment>
<reference key="1">
    <citation type="submission" date="2006-08" db="EMBL/GenBank/DDBJ databases">
        <title>Complete sequence of chromosome 1 of Burkholderia cenocepacia HI2424.</title>
        <authorList>
            <person name="Copeland A."/>
            <person name="Lucas S."/>
            <person name="Lapidus A."/>
            <person name="Barry K."/>
            <person name="Detter J.C."/>
            <person name="Glavina del Rio T."/>
            <person name="Hammon N."/>
            <person name="Israni S."/>
            <person name="Pitluck S."/>
            <person name="Chain P."/>
            <person name="Malfatti S."/>
            <person name="Shin M."/>
            <person name="Vergez L."/>
            <person name="Schmutz J."/>
            <person name="Larimer F."/>
            <person name="Land M."/>
            <person name="Hauser L."/>
            <person name="Kyrpides N."/>
            <person name="Kim E."/>
            <person name="LiPuma J.J."/>
            <person name="Gonzalez C.F."/>
            <person name="Konstantinidis K."/>
            <person name="Tiedje J.M."/>
            <person name="Richardson P."/>
        </authorList>
    </citation>
    <scope>NUCLEOTIDE SEQUENCE [LARGE SCALE GENOMIC DNA]</scope>
    <source>
        <strain>HI2424</strain>
    </source>
</reference>
<sequence>MKIHEYQGKEILRKFGVAVPRGKPAFSVDEAVKVAEELGGPVWVVKAQIHAGGRGKGGGVKVAKSIEQVREYANQILGMQLVTHQTGPEGQKVNRLMIEEGADIKQELYVSLVVDRISQKIVLMGSSEGGMDIEEVAEKHPELIHKVIVEPSTGLLDAQADDLAAKIGVPAASIPQARAILQGLYKAFWETDASLAEINPLNVSGDGKVTALDAKFNFDSNALFRHPEIVAYRDLDEEDPAEIEASKFDLAYISLDGNIGCLVNGAGLAMATMDTIKLFGGEPANFLDVGGGATTEKVTEAFKLMLKNPDLKAILVNIFGGIMRCDVIAEGVIAGSKAVNLNVPLVVRMKGTNEDLGKKMLADSGLPIISADSMEEAAQKVVAAAAGK</sequence>
<gene>
    <name evidence="1" type="primary">sucC</name>
    <name type="ordered locus">Bcen2424_2649</name>
</gene>
<organism>
    <name type="scientific">Burkholderia cenocepacia (strain HI2424)</name>
    <dbReference type="NCBI Taxonomy" id="331272"/>
    <lineage>
        <taxon>Bacteria</taxon>
        <taxon>Pseudomonadati</taxon>
        <taxon>Pseudomonadota</taxon>
        <taxon>Betaproteobacteria</taxon>
        <taxon>Burkholderiales</taxon>
        <taxon>Burkholderiaceae</taxon>
        <taxon>Burkholderia</taxon>
        <taxon>Burkholderia cepacia complex</taxon>
    </lineage>
</organism>
<accession>A0KA72</accession>
<name>SUCC_BURCH</name>